<sequence length="456" mass="48917">MNTVRETIAAIATAQGRGGVGIVRLSGPLAGKAGQLITGRTLTPRHAHYGPFRDDDGLVLDEGIALFFPGPNSFTGEDVLELQGHGGPVVLDMLLQRCVQVGCRLARPGEFSERAFLNDKLDLAQAEAIADLIEASSSQAARNALRSLQGEFSKRVHSLTEALIALRIYVEAAIDFPEEEIDFLADGHVLSMLDAVRGELSTVQREAGQGALLRDGMTVVIAGRPNAGKSSLLNQLAGREAAIVTDIAGTTRDILREHIHIDGMPLHVVDTAGLRDTDDHVEKIGVERALKAIGEADRVLLVVDSTAPEASDPFALWPEFLDQRPDPAKVTLIRNKADLSGEHVGLEQCDDGHVTITLSAKGDDTGLQLLRDHLKACMGYEQTAESGFSARRRHLDALRQASEHLEHGRAQLTLAGAGELLAEDLRQAQHALGEITGAFSSDDLLGRIFSSFCIGK</sequence>
<accession>B0KRC0</accession>
<proteinExistence type="inferred from homology"/>
<evidence type="ECO:0000255" key="1">
    <source>
        <dbReference type="HAMAP-Rule" id="MF_00379"/>
    </source>
</evidence>
<dbReference type="EC" id="3.6.-.-" evidence="1"/>
<dbReference type="EMBL" id="CP000926">
    <property type="protein sequence ID" value="ABZ01325.1"/>
    <property type="molecule type" value="Genomic_DNA"/>
</dbReference>
<dbReference type="RefSeq" id="WP_012274916.1">
    <property type="nucleotide sequence ID" value="NC_010322.1"/>
</dbReference>
<dbReference type="SMR" id="B0KRC0"/>
<dbReference type="KEGG" id="ppg:PputGB1_5443"/>
<dbReference type="eggNOG" id="COG0486">
    <property type="taxonomic scope" value="Bacteria"/>
</dbReference>
<dbReference type="HOGENOM" id="CLU_019624_4_1_6"/>
<dbReference type="Proteomes" id="UP000002157">
    <property type="component" value="Chromosome"/>
</dbReference>
<dbReference type="GO" id="GO:0005829">
    <property type="term" value="C:cytosol"/>
    <property type="evidence" value="ECO:0007669"/>
    <property type="project" value="TreeGrafter"/>
</dbReference>
<dbReference type="GO" id="GO:0005525">
    <property type="term" value="F:GTP binding"/>
    <property type="evidence" value="ECO:0007669"/>
    <property type="project" value="UniProtKB-UniRule"/>
</dbReference>
<dbReference type="GO" id="GO:0003924">
    <property type="term" value="F:GTPase activity"/>
    <property type="evidence" value="ECO:0007669"/>
    <property type="project" value="UniProtKB-UniRule"/>
</dbReference>
<dbReference type="GO" id="GO:0046872">
    <property type="term" value="F:metal ion binding"/>
    <property type="evidence" value="ECO:0007669"/>
    <property type="project" value="UniProtKB-KW"/>
</dbReference>
<dbReference type="GO" id="GO:0030488">
    <property type="term" value="P:tRNA methylation"/>
    <property type="evidence" value="ECO:0007669"/>
    <property type="project" value="TreeGrafter"/>
</dbReference>
<dbReference type="GO" id="GO:0002098">
    <property type="term" value="P:tRNA wobble uridine modification"/>
    <property type="evidence" value="ECO:0007669"/>
    <property type="project" value="TreeGrafter"/>
</dbReference>
<dbReference type="CDD" id="cd04164">
    <property type="entry name" value="trmE"/>
    <property type="match status" value="1"/>
</dbReference>
<dbReference type="CDD" id="cd14858">
    <property type="entry name" value="TrmE_N"/>
    <property type="match status" value="1"/>
</dbReference>
<dbReference type="FunFam" id="3.30.1360.120:FF:000001">
    <property type="entry name" value="tRNA modification GTPase MnmE"/>
    <property type="match status" value="1"/>
</dbReference>
<dbReference type="FunFam" id="3.40.50.300:FF:000249">
    <property type="entry name" value="tRNA modification GTPase MnmE"/>
    <property type="match status" value="1"/>
</dbReference>
<dbReference type="Gene3D" id="3.40.50.300">
    <property type="entry name" value="P-loop containing nucleotide triphosphate hydrolases"/>
    <property type="match status" value="1"/>
</dbReference>
<dbReference type="Gene3D" id="3.30.1360.120">
    <property type="entry name" value="Probable tRNA modification gtpase trme, domain 1"/>
    <property type="match status" value="1"/>
</dbReference>
<dbReference type="Gene3D" id="1.20.120.430">
    <property type="entry name" value="tRNA modification GTPase MnmE domain 2"/>
    <property type="match status" value="1"/>
</dbReference>
<dbReference type="HAMAP" id="MF_00379">
    <property type="entry name" value="GTPase_MnmE"/>
    <property type="match status" value="1"/>
</dbReference>
<dbReference type="InterPro" id="IPR031168">
    <property type="entry name" value="G_TrmE"/>
</dbReference>
<dbReference type="InterPro" id="IPR006073">
    <property type="entry name" value="GTP-bd"/>
</dbReference>
<dbReference type="InterPro" id="IPR018948">
    <property type="entry name" value="GTP-bd_TrmE_N"/>
</dbReference>
<dbReference type="InterPro" id="IPR004520">
    <property type="entry name" value="GTPase_MnmE"/>
</dbReference>
<dbReference type="InterPro" id="IPR027368">
    <property type="entry name" value="MnmE_dom2"/>
</dbReference>
<dbReference type="InterPro" id="IPR025867">
    <property type="entry name" value="MnmE_helical"/>
</dbReference>
<dbReference type="InterPro" id="IPR027417">
    <property type="entry name" value="P-loop_NTPase"/>
</dbReference>
<dbReference type="InterPro" id="IPR005225">
    <property type="entry name" value="Small_GTP-bd"/>
</dbReference>
<dbReference type="InterPro" id="IPR027266">
    <property type="entry name" value="TrmE/GcvT_dom1"/>
</dbReference>
<dbReference type="NCBIfam" id="TIGR00450">
    <property type="entry name" value="mnmE_trmE_thdF"/>
    <property type="match status" value="1"/>
</dbReference>
<dbReference type="NCBIfam" id="NF003661">
    <property type="entry name" value="PRK05291.1-3"/>
    <property type="match status" value="1"/>
</dbReference>
<dbReference type="NCBIfam" id="TIGR00231">
    <property type="entry name" value="small_GTP"/>
    <property type="match status" value="1"/>
</dbReference>
<dbReference type="PANTHER" id="PTHR42714">
    <property type="entry name" value="TRNA MODIFICATION GTPASE GTPBP3"/>
    <property type="match status" value="1"/>
</dbReference>
<dbReference type="PANTHER" id="PTHR42714:SF2">
    <property type="entry name" value="TRNA MODIFICATION GTPASE GTPBP3, MITOCHONDRIAL"/>
    <property type="match status" value="1"/>
</dbReference>
<dbReference type="Pfam" id="PF01926">
    <property type="entry name" value="MMR_HSR1"/>
    <property type="match status" value="1"/>
</dbReference>
<dbReference type="Pfam" id="PF12631">
    <property type="entry name" value="MnmE_helical"/>
    <property type="match status" value="1"/>
</dbReference>
<dbReference type="Pfam" id="PF10396">
    <property type="entry name" value="TrmE_N"/>
    <property type="match status" value="1"/>
</dbReference>
<dbReference type="SUPFAM" id="SSF52540">
    <property type="entry name" value="P-loop containing nucleoside triphosphate hydrolases"/>
    <property type="match status" value="1"/>
</dbReference>
<dbReference type="SUPFAM" id="SSF116878">
    <property type="entry name" value="TrmE connector domain"/>
    <property type="match status" value="1"/>
</dbReference>
<dbReference type="PROSITE" id="PS51709">
    <property type="entry name" value="G_TRME"/>
    <property type="match status" value="1"/>
</dbReference>
<comment type="function">
    <text evidence="1">Exhibits a very high intrinsic GTPase hydrolysis rate. Involved in the addition of a carboxymethylaminomethyl (cmnm) group at the wobble position (U34) of certain tRNAs, forming tRNA-cmnm(5)s(2)U34.</text>
</comment>
<comment type="cofactor">
    <cofactor evidence="1">
        <name>K(+)</name>
        <dbReference type="ChEBI" id="CHEBI:29103"/>
    </cofactor>
    <text evidence="1">Binds 1 potassium ion per subunit.</text>
</comment>
<comment type="subunit">
    <text evidence="1">Homodimer. Heterotetramer of two MnmE and two MnmG subunits.</text>
</comment>
<comment type="subcellular location">
    <subcellularLocation>
        <location evidence="1">Cytoplasm</location>
    </subcellularLocation>
</comment>
<comment type="similarity">
    <text evidence="1">Belongs to the TRAFAC class TrmE-Era-EngA-EngB-Septin-like GTPase superfamily. TrmE GTPase family.</text>
</comment>
<name>MNME_PSEPG</name>
<organism>
    <name type="scientific">Pseudomonas putida (strain GB-1)</name>
    <dbReference type="NCBI Taxonomy" id="76869"/>
    <lineage>
        <taxon>Bacteria</taxon>
        <taxon>Pseudomonadati</taxon>
        <taxon>Pseudomonadota</taxon>
        <taxon>Gammaproteobacteria</taxon>
        <taxon>Pseudomonadales</taxon>
        <taxon>Pseudomonadaceae</taxon>
        <taxon>Pseudomonas</taxon>
    </lineage>
</organism>
<feature type="chain" id="PRO_1000080011" description="tRNA modification GTPase MnmE">
    <location>
        <begin position="1"/>
        <end position="456"/>
    </location>
</feature>
<feature type="domain" description="TrmE-type G">
    <location>
        <begin position="216"/>
        <end position="379"/>
    </location>
</feature>
<feature type="binding site" evidence="1">
    <location>
        <position position="24"/>
    </location>
    <ligand>
        <name>(6S)-5-formyl-5,6,7,8-tetrahydrofolate</name>
        <dbReference type="ChEBI" id="CHEBI:57457"/>
    </ligand>
</feature>
<feature type="binding site" evidence="1">
    <location>
        <position position="81"/>
    </location>
    <ligand>
        <name>(6S)-5-formyl-5,6,7,8-tetrahydrofolate</name>
        <dbReference type="ChEBI" id="CHEBI:57457"/>
    </ligand>
</feature>
<feature type="binding site" evidence="1">
    <location>
        <position position="120"/>
    </location>
    <ligand>
        <name>(6S)-5-formyl-5,6,7,8-tetrahydrofolate</name>
        <dbReference type="ChEBI" id="CHEBI:57457"/>
    </ligand>
</feature>
<feature type="binding site" evidence="1">
    <location>
        <begin position="226"/>
        <end position="231"/>
    </location>
    <ligand>
        <name>GTP</name>
        <dbReference type="ChEBI" id="CHEBI:37565"/>
    </ligand>
</feature>
<feature type="binding site" evidence="1">
    <location>
        <position position="226"/>
    </location>
    <ligand>
        <name>K(+)</name>
        <dbReference type="ChEBI" id="CHEBI:29103"/>
    </ligand>
</feature>
<feature type="binding site" evidence="1">
    <location>
        <position position="230"/>
    </location>
    <ligand>
        <name>Mg(2+)</name>
        <dbReference type="ChEBI" id="CHEBI:18420"/>
    </ligand>
</feature>
<feature type="binding site" evidence="1">
    <location>
        <begin position="245"/>
        <end position="251"/>
    </location>
    <ligand>
        <name>GTP</name>
        <dbReference type="ChEBI" id="CHEBI:37565"/>
    </ligand>
</feature>
<feature type="binding site" evidence="1">
    <location>
        <position position="245"/>
    </location>
    <ligand>
        <name>K(+)</name>
        <dbReference type="ChEBI" id="CHEBI:29103"/>
    </ligand>
</feature>
<feature type="binding site" evidence="1">
    <location>
        <position position="247"/>
    </location>
    <ligand>
        <name>K(+)</name>
        <dbReference type="ChEBI" id="CHEBI:29103"/>
    </ligand>
</feature>
<feature type="binding site" evidence="1">
    <location>
        <position position="250"/>
    </location>
    <ligand>
        <name>K(+)</name>
        <dbReference type="ChEBI" id="CHEBI:29103"/>
    </ligand>
</feature>
<feature type="binding site" evidence="1">
    <location>
        <position position="251"/>
    </location>
    <ligand>
        <name>Mg(2+)</name>
        <dbReference type="ChEBI" id="CHEBI:18420"/>
    </ligand>
</feature>
<feature type="binding site" evidence="1">
    <location>
        <begin position="270"/>
        <end position="273"/>
    </location>
    <ligand>
        <name>GTP</name>
        <dbReference type="ChEBI" id="CHEBI:37565"/>
    </ligand>
</feature>
<feature type="binding site" evidence="1">
    <location>
        <begin position="335"/>
        <end position="338"/>
    </location>
    <ligand>
        <name>GTP</name>
        <dbReference type="ChEBI" id="CHEBI:37565"/>
    </ligand>
</feature>
<feature type="binding site" evidence="1">
    <location>
        <position position="456"/>
    </location>
    <ligand>
        <name>(6S)-5-formyl-5,6,7,8-tetrahydrofolate</name>
        <dbReference type="ChEBI" id="CHEBI:57457"/>
    </ligand>
</feature>
<protein>
    <recommendedName>
        <fullName evidence="1">tRNA modification GTPase MnmE</fullName>
        <ecNumber evidence="1">3.6.-.-</ecNumber>
    </recommendedName>
</protein>
<gene>
    <name evidence="1" type="primary">mnmE</name>
    <name evidence="1" type="synonym">trmE</name>
    <name type="ordered locus">PputGB1_5443</name>
</gene>
<keyword id="KW-0963">Cytoplasm</keyword>
<keyword id="KW-0342">GTP-binding</keyword>
<keyword id="KW-0378">Hydrolase</keyword>
<keyword id="KW-0460">Magnesium</keyword>
<keyword id="KW-0479">Metal-binding</keyword>
<keyword id="KW-0547">Nucleotide-binding</keyword>
<keyword id="KW-0630">Potassium</keyword>
<keyword id="KW-0819">tRNA processing</keyword>
<reference key="1">
    <citation type="submission" date="2008-01" db="EMBL/GenBank/DDBJ databases">
        <title>Complete sequence of Pseudomonas putida GB-1.</title>
        <authorList>
            <consortium name="US DOE Joint Genome Institute"/>
            <person name="Copeland A."/>
            <person name="Lucas S."/>
            <person name="Lapidus A."/>
            <person name="Barry K."/>
            <person name="Glavina del Rio T."/>
            <person name="Dalin E."/>
            <person name="Tice H."/>
            <person name="Pitluck S."/>
            <person name="Bruce D."/>
            <person name="Goodwin L."/>
            <person name="Chertkov O."/>
            <person name="Brettin T."/>
            <person name="Detter J.C."/>
            <person name="Han C."/>
            <person name="Kuske C.R."/>
            <person name="Schmutz J."/>
            <person name="Larimer F."/>
            <person name="Land M."/>
            <person name="Hauser L."/>
            <person name="Kyrpides N."/>
            <person name="Kim E."/>
            <person name="McCarthy J.K."/>
            <person name="Richardson P."/>
        </authorList>
    </citation>
    <scope>NUCLEOTIDE SEQUENCE [LARGE SCALE GENOMIC DNA]</scope>
    <source>
        <strain>GB-1</strain>
    </source>
</reference>